<feature type="chain" id="PRO_0000426784" description="Probable acyl-CoA dehydrogenase FadE10">
    <location>
        <begin position="1"/>
        <end position="650"/>
    </location>
</feature>
<feature type="region of interest" description="Disordered" evidence="2">
    <location>
        <begin position="1"/>
        <end position="23"/>
    </location>
</feature>
<feature type="compositionally biased region" description="Basic and acidic residues" evidence="2">
    <location>
        <begin position="10"/>
        <end position="23"/>
    </location>
</feature>
<feature type="active site" description="Proton acceptor" evidence="1">
    <location>
        <position position="422"/>
    </location>
</feature>
<gene>
    <name type="primary">fadE10</name>
    <name type="ordered locus">MT0896</name>
</gene>
<evidence type="ECO:0000250" key="1"/>
<evidence type="ECO:0000256" key="2">
    <source>
        <dbReference type="SAM" id="MobiDB-lite"/>
    </source>
</evidence>
<evidence type="ECO:0000305" key="3"/>
<sequence>MAQQTQVTEEQARALAEESRESGWDKPSFAKELFLGRFPLGLIHPFPKPSDAEEARTEAFLVKLREFLDTVDGSVIERAAQIPDEYVKGLAELGCFGLKIPSEYGGLNMSQVAYNRVLMMVTTVHSSLGALLSAHQSIGVPEPLKLAGTAEQKRRFLPRCAAGAISAFLLTEPDVGSDPARMASTATPIDDGQAYELEGVKLWTTNGVVADLLVVMARVPRSEGHRGGISAFVVEADSPGITVERRNKFMGLRGIENGVTRLHRVRVPKDNLIGREGDGLKIALTTLNAGRLSLPAIATGVAKQALKIAREWSVERVQWGKPVGQHEAVASKISFIAATNYALDAVVELSSQMADEGRNDIRIEAALAKLWSSEMACLVGDELLQIRGGRGYETAESLAARGERAVPVEQMVRDLRINRIFEGSSEIMRLLIAREAVDAHLTAAGDLANPKADLRQKAAAAAGASGFYAKWLPKLVFGEGQLPTTYREFGALATHLRFVERSSRKLARNTFYGMARWQASLEKKQGFLGRIVDIGAELFAISAACVRAEAQRTADPVEGEQAYELAEAFCQQATLRVEALFDALWSNTDSIDVRLANDVLEGRYTWLEQGILDQSEGTGPWIASWEPGPSTEANLARRFLTVSPSSEAKL</sequence>
<proteinExistence type="inferred from homology"/>
<comment type="catalytic activity">
    <reaction>
        <text>a 2,3-saturated acyl-CoA + A = a 2,3-dehydroacyl-CoA + AH2</text>
        <dbReference type="Rhea" id="RHEA:48608"/>
        <dbReference type="ChEBI" id="CHEBI:13193"/>
        <dbReference type="ChEBI" id="CHEBI:17499"/>
        <dbReference type="ChEBI" id="CHEBI:60015"/>
        <dbReference type="ChEBI" id="CHEBI:65111"/>
    </reaction>
</comment>
<comment type="cofactor">
    <cofactor evidence="1">
        <name>FAD</name>
        <dbReference type="ChEBI" id="CHEBI:57692"/>
    </cofactor>
</comment>
<comment type="similarity">
    <text evidence="3">Belongs to the acyl-CoA dehydrogenase family.</text>
</comment>
<protein>
    <recommendedName>
        <fullName>Probable acyl-CoA dehydrogenase FadE10</fullName>
        <ecNumber>1.3.-.-</ecNumber>
    </recommendedName>
</protein>
<name>Y873_MYCTO</name>
<keyword id="KW-0274">FAD</keyword>
<keyword id="KW-0285">Flavoprotein</keyword>
<keyword id="KW-0560">Oxidoreductase</keyword>
<keyword id="KW-1185">Reference proteome</keyword>
<dbReference type="EC" id="1.3.-.-"/>
<dbReference type="EMBL" id="AE000516">
    <property type="protein sequence ID" value="AAK45138.1"/>
    <property type="molecule type" value="Genomic_DNA"/>
</dbReference>
<dbReference type="PIR" id="A70817">
    <property type="entry name" value="A70817"/>
</dbReference>
<dbReference type="RefSeq" id="WP_003898626.1">
    <property type="nucleotide sequence ID" value="NZ_KK341227.1"/>
</dbReference>
<dbReference type="SMR" id="P9WQF6"/>
<dbReference type="KEGG" id="mtc:MT0896"/>
<dbReference type="PATRIC" id="fig|83331.31.peg.962"/>
<dbReference type="HOGENOM" id="CLU_018204_11_1_11"/>
<dbReference type="Proteomes" id="UP000001020">
    <property type="component" value="Chromosome"/>
</dbReference>
<dbReference type="GO" id="GO:0005737">
    <property type="term" value="C:cytoplasm"/>
    <property type="evidence" value="ECO:0007669"/>
    <property type="project" value="TreeGrafter"/>
</dbReference>
<dbReference type="GO" id="GO:0003995">
    <property type="term" value="F:acyl-CoA dehydrogenase activity"/>
    <property type="evidence" value="ECO:0007669"/>
    <property type="project" value="TreeGrafter"/>
</dbReference>
<dbReference type="GO" id="GO:0050660">
    <property type="term" value="F:flavin adenine dinucleotide binding"/>
    <property type="evidence" value="ECO:0007669"/>
    <property type="project" value="InterPro"/>
</dbReference>
<dbReference type="GO" id="GO:0033539">
    <property type="term" value="P:fatty acid beta-oxidation using acyl-CoA dehydrogenase"/>
    <property type="evidence" value="ECO:0007669"/>
    <property type="project" value="TreeGrafter"/>
</dbReference>
<dbReference type="FunFam" id="1.20.140.10:FF:000019">
    <property type="entry name" value="Acyl-CoA dehydrogenase"/>
    <property type="match status" value="1"/>
</dbReference>
<dbReference type="FunFam" id="1.20.140.10:FF:000042">
    <property type="entry name" value="Acyl-CoA dehydrogenase FadE10"/>
    <property type="match status" value="1"/>
</dbReference>
<dbReference type="FunFam" id="2.40.110.10:FF:000023">
    <property type="entry name" value="Acyl-CoA dehydrogenase FadE10"/>
    <property type="match status" value="1"/>
</dbReference>
<dbReference type="FunFam" id="1.10.540.10:FF:000001">
    <property type="entry name" value="Very long-chain-specific acyl-CoA dehydrogenase, mitochondrial"/>
    <property type="match status" value="1"/>
</dbReference>
<dbReference type="Gene3D" id="1.10.540.10">
    <property type="entry name" value="Acyl-CoA dehydrogenase/oxidase, N-terminal domain"/>
    <property type="match status" value="1"/>
</dbReference>
<dbReference type="Gene3D" id="2.40.110.10">
    <property type="entry name" value="Butyryl-CoA Dehydrogenase, subunit A, domain 2"/>
    <property type="match status" value="1"/>
</dbReference>
<dbReference type="Gene3D" id="1.20.140.10">
    <property type="entry name" value="Butyryl-CoA Dehydrogenase, subunit A, domain 3"/>
    <property type="match status" value="2"/>
</dbReference>
<dbReference type="InterPro" id="IPR050741">
    <property type="entry name" value="Acyl-CoA_dehydrogenase"/>
</dbReference>
<dbReference type="InterPro" id="IPR006091">
    <property type="entry name" value="Acyl-CoA_Oxase/DH_mid-dom"/>
</dbReference>
<dbReference type="InterPro" id="IPR046373">
    <property type="entry name" value="Acyl-CoA_Oxase/DH_mid-dom_sf"/>
</dbReference>
<dbReference type="InterPro" id="IPR036250">
    <property type="entry name" value="AcylCo_DH-like_C"/>
</dbReference>
<dbReference type="InterPro" id="IPR009075">
    <property type="entry name" value="AcylCo_DH/oxidase_C"/>
</dbReference>
<dbReference type="InterPro" id="IPR013786">
    <property type="entry name" value="AcylCoA_DH/ox_N"/>
</dbReference>
<dbReference type="InterPro" id="IPR037069">
    <property type="entry name" value="AcylCoA_DH/ox_N_sf"/>
</dbReference>
<dbReference type="InterPro" id="IPR009100">
    <property type="entry name" value="AcylCoA_DH/oxidase_NM_dom_sf"/>
</dbReference>
<dbReference type="PANTHER" id="PTHR48083:SF31">
    <property type="entry name" value="ACYL-COA DEHYDROGENASE FADE10-RELATED"/>
    <property type="match status" value="1"/>
</dbReference>
<dbReference type="PANTHER" id="PTHR48083">
    <property type="entry name" value="MEDIUM-CHAIN SPECIFIC ACYL-COA DEHYDROGENASE, MITOCHONDRIAL-RELATED"/>
    <property type="match status" value="1"/>
</dbReference>
<dbReference type="Pfam" id="PF00441">
    <property type="entry name" value="Acyl-CoA_dh_1"/>
    <property type="match status" value="1"/>
</dbReference>
<dbReference type="Pfam" id="PF02770">
    <property type="entry name" value="Acyl-CoA_dh_M"/>
    <property type="match status" value="1"/>
</dbReference>
<dbReference type="Pfam" id="PF02771">
    <property type="entry name" value="Acyl-CoA_dh_N"/>
    <property type="match status" value="1"/>
</dbReference>
<dbReference type="SUPFAM" id="SSF47203">
    <property type="entry name" value="Acyl-CoA dehydrogenase C-terminal domain-like"/>
    <property type="match status" value="1"/>
</dbReference>
<dbReference type="SUPFAM" id="SSF56645">
    <property type="entry name" value="Acyl-CoA dehydrogenase NM domain-like"/>
    <property type="match status" value="1"/>
</dbReference>
<reference key="1">
    <citation type="journal article" date="2002" name="J. Bacteriol.">
        <title>Whole-genome comparison of Mycobacterium tuberculosis clinical and laboratory strains.</title>
        <authorList>
            <person name="Fleischmann R.D."/>
            <person name="Alland D."/>
            <person name="Eisen J.A."/>
            <person name="Carpenter L."/>
            <person name="White O."/>
            <person name="Peterson J.D."/>
            <person name="DeBoy R.T."/>
            <person name="Dodson R.J."/>
            <person name="Gwinn M.L."/>
            <person name="Haft D.H."/>
            <person name="Hickey E.K."/>
            <person name="Kolonay J.F."/>
            <person name="Nelson W.C."/>
            <person name="Umayam L.A."/>
            <person name="Ermolaeva M.D."/>
            <person name="Salzberg S.L."/>
            <person name="Delcher A."/>
            <person name="Utterback T.R."/>
            <person name="Weidman J.F."/>
            <person name="Khouri H.M."/>
            <person name="Gill J."/>
            <person name="Mikula A."/>
            <person name="Bishai W."/>
            <person name="Jacobs W.R. Jr."/>
            <person name="Venter J.C."/>
            <person name="Fraser C.M."/>
        </authorList>
    </citation>
    <scope>NUCLEOTIDE SEQUENCE [LARGE SCALE GENOMIC DNA]</scope>
    <source>
        <strain>CDC 1551 / Oshkosh</strain>
    </source>
</reference>
<accession>P9WQF6</accession>
<accession>L0T558</accession>
<accession>O53885</accession>
<accession>P63429</accession>
<accession>Q10535</accession>
<organism>
    <name type="scientific">Mycobacterium tuberculosis (strain CDC 1551 / Oshkosh)</name>
    <dbReference type="NCBI Taxonomy" id="83331"/>
    <lineage>
        <taxon>Bacteria</taxon>
        <taxon>Bacillati</taxon>
        <taxon>Actinomycetota</taxon>
        <taxon>Actinomycetes</taxon>
        <taxon>Mycobacteriales</taxon>
        <taxon>Mycobacteriaceae</taxon>
        <taxon>Mycobacterium</taxon>
        <taxon>Mycobacterium tuberculosis complex</taxon>
    </lineage>
</organism>